<dbReference type="EMBL" id="U96626">
    <property type="protein sequence ID" value="AAC39963.1"/>
    <property type="molecule type" value="Genomic_DNA"/>
</dbReference>
<dbReference type="EMBL" id="BC012672">
    <property type="protein sequence ID" value="AAH12672.1"/>
    <property type="molecule type" value="mRNA"/>
</dbReference>
<dbReference type="CCDS" id="CCDS25260.1"/>
<dbReference type="RefSeq" id="NP_031715.1">
    <property type="nucleotide sequence ID" value="NM_007689.5"/>
</dbReference>
<dbReference type="SMR" id="O55226"/>
<dbReference type="FunCoup" id="O55226">
    <property type="interactions" value="536"/>
</dbReference>
<dbReference type="STRING" id="10090.ENSMUSP00000047844"/>
<dbReference type="GlyCosmos" id="O55226">
    <property type="glycosylation" value="1 site, No reported glycans"/>
</dbReference>
<dbReference type="GlyGen" id="O55226">
    <property type="glycosylation" value="1 site"/>
</dbReference>
<dbReference type="PhosphoSitePlus" id="O55226"/>
<dbReference type="jPOST" id="O55226"/>
<dbReference type="PaxDb" id="10090-ENSMUSP00000047844"/>
<dbReference type="ProteomicsDB" id="281123"/>
<dbReference type="Antibodypedia" id="18082">
    <property type="antibodies" value="117 antibodies from 27 providers"/>
</dbReference>
<dbReference type="DNASU" id="12643"/>
<dbReference type="Ensembl" id="ENSMUST00000040418.9">
    <property type="protein sequence ID" value="ENSMUSP00000047844.9"/>
    <property type="gene ID" value="ENSMUSG00000039084.9"/>
</dbReference>
<dbReference type="GeneID" id="12643"/>
<dbReference type="KEGG" id="mmu:12643"/>
<dbReference type="UCSC" id="uc007kzd.1">
    <property type="organism name" value="mouse"/>
</dbReference>
<dbReference type="AGR" id="MGI:1096866"/>
<dbReference type="CTD" id="1101"/>
<dbReference type="MGI" id="MGI:1096866">
    <property type="gene designation" value="Chad"/>
</dbReference>
<dbReference type="VEuPathDB" id="HostDB:ENSMUSG00000039084"/>
<dbReference type="eggNOG" id="KOG0619">
    <property type="taxonomic scope" value="Eukaryota"/>
</dbReference>
<dbReference type="GeneTree" id="ENSGT00940000154464"/>
<dbReference type="HOGENOM" id="CLU_000288_18_6_1"/>
<dbReference type="InParanoid" id="O55226"/>
<dbReference type="OMA" id="QHCQVRE"/>
<dbReference type="OrthoDB" id="2190652at2759"/>
<dbReference type="PhylomeDB" id="O55226"/>
<dbReference type="TreeFam" id="TF332659"/>
<dbReference type="BioGRID-ORCS" id="12643">
    <property type="hits" value="2 hits in 75 CRISPR screens"/>
</dbReference>
<dbReference type="PRO" id="PR:O55226"/>
<dbReference type="Proteomes" id="UP000000589">
    <property type="component" value="Chromosome 11"/>
</dbReference>
<dbReference type="RNAct" id="O55226">
    <property type="molecule type" value="protein"/>
</dbReference>
<dbReference type="Bgee" id="ENSMUSG00000039084">
    <property type="expression patterns" value="Expressed in tarsal region and 120 other cell types or tissues"/>
</dbReference>
<dbReference type="ExpressionAtlas" id="O55226">
    <property type="expression patterns" value="baseline and differential"/>
</dbReference>
<dbReference type="GO" id="GO:0005576">
    <property type="term" value="C:extracellular region"/>
    <property type="evidence" value="ECO:0007669"/>
    <property type="project" value="UniProtKB-KW"/>
</dbReference>
<dbReference type="GO" id="GO:0060348">
    <property type="term" value="P:bone development"/>
    <property type="evidence" value="ECO:0000315"/>
    <property type="project" value="MGI"/>
</dbReference>
<dbReference type="GO" id="GO:1900155">
    <property type="term" value="P:negative regulation of bone trabecula formation"/>
    <property type="evidence" value="ECO:0000315"/>
    <property type="project" value="MGI"/>
</dbReference>
<dbReference type="FunFam" id="3.80.10.10:FF:000059">
    <property type="entry name" value="Chondroadherin like"/>
    <property type="match status" value="1"/>
</dbReference>
<dbReference type="Gene3D" id="3.80.10.10">
    <property type="entry name" value="Ribonuclease Inhibitor"/>
    <property type="match status" value="1"/>
</dbReference>
<dbReference type="InterPro" id="IPR000483">
    <property type="entry name" value="Cys-rich_flank_reg_C"/>
</dbReference>
<dbReference type="InterPro" id="IPR001611">
    <property type="entry name" value="Leu-rich_rpt"/>
</dbReference>
<dbReference type="InterPro" id="IPR003591">
    <property type="entry name" value="Leu-rich_rpt_typical-subtyp"/>
</dbReference>
<dbReference type="InterPro" id="IPR032675">
    <property type="entry name" value="LRR_dom_sf"/>
</dbReference>
<dbReference type="InterPro" id="IPR050541">
    <property type="entry name" value="LRR_TM_domain-containing"/>
</dbReference>
<dbReference type="InterPro" id="IPR000372">
    <property type="entry name" value="LRRNT"/>
</dbReference>
<dbReference type="PANTHER" id="PTHR24369">
    <property type="entry name" value="ANTIGEN BSP, PUTATIVE-RELATED"/>
    <property type="match status" value="1"/>
</dbReference>
<dbReference type="PANTHER" id="PTHR24369:SF210">
    <property type="entry name" value="CHAOPTIN-RELATED"/>
    <property type="match status" value="1"/>
</dbReference>
<dbReference type="Pfam" id="PF13855">
    <property type="entry name" value="LRR_8"/>
    <property type="match status" value="3"/>
</dbReference>
<dbReference type="Pfam" id="PF01462">
    <property type="entry name" value="LRRNT"/>
    <property type="match status" value="1"/>
</dbReference>
<dbReference type="SMART" id="SM00369">
    <property type="entry name" value="LRR_TYP"/>
    <property type="match status" value="9"/>
</dbReference>
<dbReference type="SMART" id="SM00082">
    <property type="entry name" value="LRRCT"/>
    <property type="match status" value="1"/>
</dbReference>
<dbReference type="SMART" id="SM00013">
    <property type="entry name" value="LRRNT"/>
    <property type="match status" value="1"/>
</dbReference>
<dbReference type="SUPFAM" id="SSF52058">
    <property type="entry name" value="L domain-like"/>
    <property type="match status" value="1"/>
</dbReference>
<dbReference type="PROSITE" id="PS51450">
    <property type="entry name" value="LRR"/>
    <property type="match status" value="10"/>
</dbReference>
<gene>
    <name type="primary">Chad</name>
</gene>
<name>CHAD_MOUSE</name>
<reference key="1">
    <citation type="journal article" date="1998" name="Genomics">
        <title>The mouse chondroadherin gene: characterization and chromosomal localization.</title>
        <authorList>
            <person name="Landgren C."/>
            <person name="Beier D.R."/>
            <person name="Faessler R."/>
            <person name="Heinegaard D."/>
            <person name="Sommarin Y."/>
        </authorList>
    </citation>
    <scope>NUCLEOTIDE SEQUENCE [GENOMIC DNA]</scope>
</reference>
<reference key="2">
    <citation type="journal article" date="2004" name="Genome Res.">
        <title>The status, quality, and expansion of the NIH full-length cDNA project: the Mammalian Gene Collection (MGC).</title>
        <authorList>
            <consortium name="The MGC Project Team"/>
        </authorList>
    </citation>
    <scope>NUCLEOTIDE SEQUENCE [LARGE SCALE MRNA]</scope>
    <source>
        <tissue>Salivary gland</tissue>
    </source>
</reference>
<proteinExistence type="evidence at transcript level"/>
<evidence type="ECO:0000250" key="1"/>
<evidence type="ECO:0000255" key="2"/>
<evidence type="ECO:0000256" key="3">
    <source>
        <dbReference type="SAM" id="MobiDB-lite"/>
    </source>
</evidence>
<evidence type="ECO:0000305" key="4"/>
<organism>
    <name type="scientific">Mus musculus</name>
    <name type="common">Mouse</name>
    <dbReference type="NCBI Taxonomy" id="10090"/>
    <lineage>
        <taxon>Eukaryota</taxon>
        <taxon>Metazoa</taxon>
        <taxon>Chordata</taxon>
        <taxon>Craniata</taxon>
        <taxon>Vertebrata</taxon>
        <taxon>Euteleostomi</taxon>
        <taxon>Mammalia</taxon>
        <taxon>Eutheria</taxon>
        <taxon>Euarchontoglires</taxon>
        <taxon>Glires</taxon>
        <taxon>Rodentia</taxon>
        <taxon>Myomorpha</taxon>
        <taxon>Muroidea</taxon>
        <taxon>Muridae</taxon>
        <taxon>Murinae</taxon>
        <taxon>Mus</taxon>
        <taxon>Mus</taxon>
    </lineage>
</organism>
<sequence>MARALLFSLVFLAILLPALAACPQNCHCHGDLQHVICDKVGLQKIPKVSETTKLLNLQRNNFPVLAANSFRTMPNLVSLHLQHCNIREVAAGAFRGLKQLIYLYLSHNDIRVLRAGAFDDLTELTYLYLDHNKVSELPRGLLSPLVNLFILQLNNNKIRELRAGAFQGAKDLRWLYLSENALSSLQPGSLDDVENLAKFHLDKNQLSSYPSAALSKLRVVEELKLSHNPLKSIPDNAFQSFGRYLETLWLDNTNLEKFSDAAFSGVTTLKHVHLDNNRLNQLPSSFPFDNLETLTLTNNPWKCTCQLRGLRRWLEAKASRPDATCSSPAKFKGQRIRDTDALRSCKSPTKRSKKAGRH</sequence>
<feature type="signal peptide" evidence="2">
    <location>
        <begin position="1"/>
        <end position="20"/>
    </location>
</feature>
<feature type="chain" id="PRO_0000032774" description="Chondroadherin">
    <location>
        <begin position="21"/>
        <end position="358"/>
    </location>
</feature>
<feature type="domain" description="LRRNT">
    <location>
        <begin position="21"/>
        <end position="50"/>
    </location>
</feature>
<feature type="repeat" description="LRR 1">
    <location>
        <begin position="51"/>
        <end position="72"/>
    </location>
</feature>
<feature type="repeat" description="LRR 2">
    <location>
        <begin position="75"/>
        <end position="96"/>
    </location>
</feature>
<feature type="repeat" description="LRR 3">
    <location>
        <begin position="99"/>
        <end position="120"/>
    </location>
</feature>
<feature type="repeat" description="LRR 4">
    <location>
        <begin position="123"/>
        <end position="144"/>
    </location>
</feature>
<feature type="repeat" description="LRR 5">
    <location>
        <begin position="147"/>
        <end position="168"/>
    </location>
</feature>
<feature type="repeat" description="LRR 6">
    <location>
        <begin position="171"/>
        <end position="192"/>
    </location>
</feature>
<feature type="repeat" description="LRR 7">
    <location>
        <begin position="195"/>
        <end position="216"/>
    </location>
</feature>
<feature type="repeat" description="LRR 8">
    <location>
        <begin position="219"/>
        <end position="240"/>
    </location>
</feature>
<feature type="repeat" description="LRR 9">
    <location>
        <begin position="244"/>
        <end position="265"/>
    </location>
</feature>
<feature type="repeat" description="LRR 10">
    <location>
        <begin position="268"/>
        <end position="289"/>
    </location>
</feature>
<feature type="domain" description="LRRCT">
    <location>
        <begin position="299"/>
        <end position="347"/>
    </location>
</feature>
<feature type="region of interest" description="Disordered" evidence="3">
    <location>
        <begin position="322"/>
        <end position="358"/>
    </location>
</feature>
<feature type="compositionally biased region" description="Basic residues" evidence="3">
    <location>
        <begin position="348"/>
        <end position="358"/>
    </location>
</feature>
<feature type="glycosylation site" description="O-linked (GalNAc...) serine" evidence="2">
    <location>
        <position position="143"/>
    </location>
</feature>
<feature type="disulfide bond" evidence="1">
    <location>
        <begin position="22"/>
        <end position="37"/>
    </location>
</feature>
<feature type="disulfide bond" evidence="1">
    <location>
        <begin position="303"/>
        <end position="345"/>
    </location>
</feature>
<feature type="disulfide bond" evidence="1">
    <location>
        <begin position="305"/>
        <end position="325"/>
    </location>
</feature>
<protein>
    <recommendedName>
        <fullName>Chondroadherin</fullName>
    </recommendedName>
    <alternativeName>
        <fullName>Cartilage leucine-rich protein</fullName>
    </alternativeName>
</protein>
<comment type="function">
    <text evidence="1">Promotes attachment of chondrocytes, fibroblasts, and osteoblasts. This binding is mediated (at least for chondrocytes and fibroblasts) by the integrin alpha(2)beta(1). May play an important role in the regulation of chondrocyte growth and proliferation (By similarity).</text>
</comment>
<comment type="subunit">
    <text evidence="1">Mostly monomeric. Interacts with collagen type II (By similarity).</text>
</comment>
<comment type="subcellular location">
    <subcellularLocation>
        <location evidence="1">Secreted</location>
        <location evidence="1">Extracellular space</location>
        <location evidence="1">Extracellular matrix</location>
    </subcellularLocation>
</comment>
<comment type="tissue specificity">
    <text>Cartilage.</text>
</comment>
<comment type="similarity">
    <text evidence="4">Belongs to the small leucine-rich proteoglycan (SLRP) family. SLRP class IV subfamily.</text>
</comment>
<keyword id="KW-1015">Disulfide bond</keyword>
<keyword id="KW-0272">Extracellular matrix</keyword>
<keyword id="KW-0325">Glycoprotein</keyword>
<keyword id="KW-0433">Leucine-rich repeat</keyword>
<keyword id="KW-1185">Reference proteome</keyword>
<keyword id="KW-0677">Repeat</keyword>
<keyword id="KW-0964">Secreted</keyword>
<keyword id="KW-0732">Signal</keyword>
<accession>O55226</accession>